<dbReference type="EMBL" id="CP000115">
    <property type="protein sequence ID" value="ABA05040.1"/>
    <property type="molecule type" value="Genomic_DNA"/>
</dbReference>
<dbReference type="RefSeq" id="WP_011315036.1">
    <property type="nucleotide sequence ID" value="NC_007406.1"/>
</dbReference>
<dbReference type="SMR" id="Q3SRQ1"/>
<dbReference type="STRING" id="323098.Nwi_1779"/>
<dbReference type="KEGG" id="nwi:Nwi_1779"/>
<dbReference type="eggNOG" id="COG1826">
    <property type="taxonomic scope" value="Bacteria"/>
</dbReference>
<dbReference type="HOGENOM" id="CLU_086034_5_0_5"/>
<dbReference type="OrthoDB" id="7161179at2"/>
<dbReference type="Proteomes" id="UP000002531">
    <property type="component" value="Chromosome"/>
</dbReference>
<dbReference type="GO" id="GO:0033281">
    <property type="term" value="C:TAT protein transport complex"/>
    <property type="evidence" value="ECO:0007669"/>
    <property type="project" value="UniProtKB-UniRule"/>
</dbReference>
<dbReference type="GO" id="GO:0008320">
    <property type="term" value="F:protein transmembrane transporter activity"/>
    <property type="evidence" value="ECO:0007669"/>
    <property type="project" value="UniProtKB-UniRule"/>
</dbReference>
<dbReference type="GO" id="GO:0043953">
    <property type="term" value="P:protein transport by the Tat complex"/>
    <property type="evidence" value="ECO:0007669"/>
    <property type="project" value="UniProtKB-UniRule"/>
</dbReference>
<dbReference type="Gene3D" id="1.20.5.3310">
    <property type="match status" value="1"/>
</dbReference>
<dbReference type="HAMAP" id="MF_00236">
    <property type="entry name" value="TatA_E"/>
    <property type="match status" value="1"/>
</dbReference>
<dbReference type="InterPro" id="IPR003369">
    <property type="entry name" value="TatA/B/E"/>
</dbReference>
<dbReference type="InterPro" id="IPR006312">
    <property type="entry name" value="TatA/E"/>
</dbReference>
<dbReference type="NCBIfam" id="NF001940">
    <property type="entry name" value="PRK00720.1"/>
    <property type="match status" value="1"/>
</dbReference>
<dbReference type="NCBIfam" id="TIGR01411">
    <property type="entry name" value="tatAE"/>
    <property type="match status" value="1"/>
</dbReference>
<dbReference type="PANTHER" id="PTHR42982">
    <property type="entry name" value="SEC-INDEPENDENT PROTEIN TRANSLOCASE PROTEIN TATA"/>
    <property type="match status" value="1"/>
</dbReference>
<dbReference type="PANTHER" id="PTHR42982:SF1">
    <property type="entry name" value="SEC-INDEPENDENT PROTEIN TRANSLOCASE PROTEIN TATA"/>
    <property type="match status" value="1"/>
</dbReference>
<dbReference type="Pfam" id="PF02416">
    <property type="entry name" value="TatA_B_E"/>
    <property type="match status" value="1"/>
</dbReference>
<feature type="chain" id="PRO_1000044413" description="Sec-independent protein translocase protein TatA">
    <location>
        <begin position="1"/>
        <end position="78"/>
    </location>
</feature>
<feature type="transmembrane region" description="Helical" evidence="1">
    <location>
        <begin position="1"/>
        <end position="21"/>
    </location>
</feature>
<feature type="region of interest" description="Disordered" evidence="2">
    <location>
        <begin position="43"/>
        <end position="78"/>
    </location>
</feature>
<feature type="compositionally biased region" description="Basic and acidic residues" evidence="2">
    <location>
        <begin position="43"/>
        <end position="55"/>
    </location>
</feature>
<evidence type="ECO:0000255" key="1">
    <source>
        <dbReference type="HAMAP-Rule" id="MF_00236"/>
    </source>
</evidence>
<evidence type="ECO:0000256" key="2">
    <source>
        <dbReference type="SAM" id="MobiDB-lite"/>
    </source>
</evidence>
<gene>
    <name evidence="1" type="primary">tatA</name>
    <name type="ordered locus">Nwi_1779</name>
</gene>
<keyword id="KW-0997">Cell inner membrane</keyword>
<keyword id="KW-1003">Cell membrane</keyword>
<keyword id="KW-0472">Membrane</keyword>
<keyword id="KW-0653">Protein transport</keyword>
<keyword id="KW-1185">Reference proteome</keyword>
<keyword id="KW-0811">Translocation</keyword>
<keyword id="KW-0812">Transmembrane</keyword>
<keyword id="KW-1133">Transmembrane helix</keyword>
<keyword id="KW-0813">Transport</keyword>
<protein>
    <recommendedName>
        <fullName evidence="1">Sec-independent protein translocase protein TatA</fullName>
    </recommendedName>
</protein>
<proteinExistence type="inferred from homology"/>
<organism>
    <name type="scientific">Nitrobacter winogradskyi (strain ATCC 25391 / DSM 10237 / CIP 104748 / NCIMB 11846 / Nb-255)</name>
    <dbReference type="NCBI Taxonomy" id="323098"/>
    <lineage>
        <taxon>Bacteria</taxon>
        <taxon>Pseudomonadati</taxon>
        <taxon>Pseudomonadota</taxon>
        <taxon>Alphaproteobacteria</taxon>
        <taxon>Hyphomicrobiales</taxon>
        <taxon>Nitrobacteraceae</taxon>
        <taxon>Nitrobacter</taxon>
    </lineage>
</organism>
<reference key="1">
    <citation type="journal article" date="2006" name="Appl. Environ. Microbiol.">
        <title>Genome sequence of the chemolithoautotrophic nitrite-oxidizing bacterium Nitrobacter winogradskyi Nb-255.</title>
        <authorList>
            <person name="Starkenburg S.R."/>
            <person name="Chain P.S.G."/>
            <person name="Sayavedra-Soto L.A."/>
            <person name="Hauser L."/>
            <person name="Land M.L."/>
            <person name="Larimer F.W."/>
            <person name="Malfatti S.A."/>
            <person name="Klotz M.G."/>
            <person name="Bottomley P.J."/>
            <person name="Arp D.J."/>
            <person name="Hickey W.J."/>
        </authorList>
    </citation>
    <scope>NUCLEOTIDE SEQUENCE [LARGE SCALE GENOMIC DNA]</scope>
    <source>
        <strain>ATCC 25391 / DSM 10237 / CIP 104748 / NCIMB 11846 / Nb-255</strain>
    </source>
</reference>
<sequence>MGSLSIWHWIVVVAVILLLFGRGKISDLMGDVAQGIKAFKKGMKDDEKTAEKPEPVKTINHNADGSGAARSDTGSKVI</sequence>
<accession>Q3SRQ1</accession>
<comment type="function">
    <text evidence="1">Part of the twin-arginine translocation (Tat) system that transports large folded proteins containing a characteristic twin-arginine motif in their signal peptide across membranes. TatA could form the protein-conducting channel of the Tat system.</text>
</comment>
<comment type="subunit">
    <text evidence="1">The Tat system comprises two distinct complexes: a TatABC complex, containing multiple copies of TatA, TatB and TatC subunits, and a separate TatA complex, containing only TatA subunits. Substrates initially bind to the TatABC complex, which probably triggers association of the separate TatA complex to form the active translocon.</text>
</comment>
<comment type="subcellular location">
    <subcellularLocation>
        <location evidence="1">Cell inner membrane</location>
        <topology evidence="1">Single-pass membrane protein</topology>
    </subcellularLocation>
</comment>
<comment type="similarity">
    <text evidence="1">Belongs to the TatA/E family.</text>
</comment>
<name>TATA_NITWN</name>